<reference key="1">
    <citation type="journal article" date="2004" name="Nucleic Acids Res.">
        <title>Whole genome comparisons of serotype 4b and 1/2a strains of the food-borne pathogen Listeria monocytogenes reveal new insights into the core genome components of this species.</title>
        <authorList>
            <person name="Nelson K.E."/>
            <person name="Fouts D.E."/>
            <person name="Mongodin E.F."/>
            <person name="Ravel J."/>
            <person name="DeBoy R.T."/>
            <person name="Kolonay J.F."/>
            <person name="Rasko D.A."/>
            <person name="Angiuoli S.V."/>
            <person name="Gill S.R."/>
            <person name="Paulsen I.T."/>
            <person name="Peterson J.D."/>
            <person name="White O."/>
            <person name="Nelson W.C."/>
            <person name="Nierman W.C."/>
            <person name="Beanan M.J."/>
            <person name="Brinkac L.M."/>
            <person name="Daugherty S.C."/>
            <person name="Dodson R.J."/>
            <person name="Durkin A.S."/>
            <person name="Madupu R."/>
            <person name="Haft D.H."/>
            <person name="Selengut J."/>
            <person name="Van Aken S.E."/>
            <person name="Khouri H.M."/>
            <person name="Fedorova N."/>
            <person name="Forberger H.A."/>
            <person name="Tran B."/>
            <person name="Kathariou S."/>
            <person name="Wonderling L.D."/>
            <person name="Uhlich G.A."/>
            <person name="Bayles D.O."/>
            <person name="Luchansky J.B."/>
            <person name="Fraser C.M."/>
        </authorList>
    </citation>
    <scope>NUCLEOTIDE SEQUENCE [LARGE SCALE GENOMIC DNA]</scope>
    <source>
        <strain>F2365</strain>
    </source>
</reference>
<sequence length="188" mass="21799">MKHKVGILGGTFDPPHLAHLRMAEEAKKQLGLEKILFLPNKIPPHKHISGMASNDERVEMLQLMIEGIDSFEIDTRELMRAGKSYTYDTMRDMISEQPDTDFYFIIGGDMVEYLPKWYHIDDLVKMVTFVGVNRPSYQTEVPYDIVKINMPETTISSTEIRNNIENASTFLPEKVWSYIKEHQLYGKK</sequence>
<keyword id="KW-0067">ATP-binding</keyword>
<keyword id="KW-0520">NAD</keyword>
<keyword id="KW-0547">Nucleotide-binding</keyword>
<keyword id="KW-0548">Nucleotidyltransferase</keyword>
<keyword id="KW-0662">Pyridine nucleotide biosynthesis</keyword>
<keyword id="KW-0808">Transferase</keyword>
<evidence type="ECO:0000255" key="1">
    <source>
        <dbReference type="HAMAP-Rule" id="MF_00244"/>
    </source>
</evidence>
<feature type="chain" id="PRO_0000181423" description="Probable nicotinate-nucleotide adenylyltransferase">
    <location>
        <begin position="1"/>
        <end position="188"/>
    </location>
</feature>
<comment type="function">
    <text evidence="1">Catalyzes the reversible adenylation of nicotinate mononucleotide (NaMN) to nicotinic acid adenine dinucleotide (NaAD).</text>
</comment>
<comment type="catalytic activity">
    <reaction evidence="1">
        <text>nicotinate beta-D-ribonucleotide + ATP + H(+) = deamido-NAD(+) + diphosphate</text>
        <dbReference type="Rhea" id="RHEA:22860"/>
        <dbReference type="ChEBI" id="CHEBI:15378"/>
        <dbReference type="ChEBI" id="CHEBI:30616"/>
        <dbReference type="ChEBI" id="CHEBI:33019"/>
        <dbReference type="ChEBI" id="CHEBI:57502"/>
        <dbReference type="ChEBI" id="CHEBI:58437"/>
        <dbReference type="EC" id="2.7.7.18"/>
    </reaction>
</comment>
<comment type="pathway">
    <text evidence="1">Cofactor biosynthesis; NAD(+) biosynthesis; deamido-NAD(+) from nicotinate D-ribonucleotide: step 1/1.</text>
</comment>
<comment type="similarity">
    <text evidence="1">Belongs to the NadD family.</text>
</comment>
<name>NADD_LISMF</name>
<organism>
    <name type="scientific">Listeria monocytogenes serotype 4b (strain F2365)</name>
    <dbReference type="NCBI Taxonomy" id="265669"/>
    <lineage>
        <taxon>Bacteria</taxon>
        <taxon>Bacillati</taxon>
        <taxon>Bacillota</taxon>
        <taxon>Bacilli</taxon>
        <taxon>Bacillales</taxon>
        <taxon>Listeriaceae</taxon>
        <taxon>Listeria</taxon>
    </lineage>
</organism>
<dbReference type="EC" id="2.7.7.18" evidence="1"/>
<dbReference type="EMBL" id="AE017262">
    <property type="protein sequence ID" value="AAT04282.1"/>
    <property type="molecule type" value="Genomic_DNA"/>
</dbReference>
<dbReference type="RefSeq" id="WP_003734325.1">
    <property type="nucleotide sequence ID" value="NC_002973.6"/>
</dbReference>
<dbReference type="SMR" id="Q71ZI2"/>
<dbReference type="KEGG" id="lmf:LMOf2365_1507"/>
<dbReference type="HOGENOM" id="CLU_069765_3_1_9"/>
<dbReference type="UniPathway" id="UPA00253">
    <property type="reaction ID" value="UER00332"/>
</dbReference>
<dbReference type="GO" id="GO:0005524">
    <property type="term" value="F:ATP binding"/>
    <property type="evidence" value="ECO:0007669"/>
    <property type="project" value="UniProtKB-KW"/>
</dbReference>
<dbReference type="GO" id="GO:0004515">
    <property type="term" value="F:nicotinate-nucleotide adenylyltransferase activity"/>
    <property type="evidence" value="ECO:0007669"/>
    <property type="project" value="UniProtKB-UniRule"/>
</dbReference>
<dbReference type="GO" id="GO:0009435">
    <property type="term" value="P:NAD biosynthetic process"/>
    <property type="evidence" value="ECO:0007669"/>
    <property type="project" value="UniProtKB-UniRule"/>
</dbReference>
<dbReference type="CDD" id="cd02165">
    <property type="entry name" value="NMNAT"/>
    <property type="match status" value="1"/>
</dbReference>
<dbReference type="FunFam" id="3.40.50.620:FF:000079">
    <property type="entry name" value="Probable nicotinate-nucleotide adenylyltransferase"/>
    <property type="match status" value="1"/>
</dbReference>
<dbReference type="Gene3D" id="3.40.50.620">
    <property type="entry name" value="HUPs"/>
    <property type="match status" value="1"/>
</dbReference>
<dbReference type="HAMAP" id="MF_00244">
    <property type="entry name" value="NaMN_adenylyltr"/>
    <property type="match status" value="1"/>
</dbReference>
<dbReference type="InterPro" id="IPR004821">
    <property type="entry name" value="Cyt_trans-like"/>
</dbReference>
<dbReference type="InterPro" id="IPR005248">
    <property type="entry name" value="NadD/NMNAT"/>
</dbReference>
<dbReference type="InterPro" id="IPR014729">
    <property type="entry name" value="Rossmann-like_a/b/a_fold"/>
</dbReference>
<dbReference type="NCBIfam" id="TIGR00125">
    <property type="entry name" value="cyt_tran_rel"/>
    <property type="match status" value="1"/>
</dbReference>
<dbReference type="NCBIfam" id="TIGR00482">
    <property type="entry name" value="nicotinate (nicotinamide) nucleotide adenylyltransferase"/>
    <property type="match status" value="1"/>
</dbReference>
<dbReference type="NCBIfam" id="NF000840">
    <property type="entry name" value="PRK00071.1-3"/>
    <property type="match status" value="1"/>
</dbReference>
<dbReference type="NCBIfam" id="NF000841">
    <property type="entry name" value="PRK00071.1-4"/>
    <property type="match status" value="1"/>
</dbReference>
<dbReference type="PANTHER" id="PTHR39321">
    <property type="entry name" value="NICOTINATE-NUCLEOTIDE ADENYLYLTRANSFERASE-RELATED"/>
    <property type="match status" value="1"/>
</dbReference>
<dbReference type="PANTHER" id="PTHR39321:SF3">
    <property type="entry name" value="PHOSPHOPANTETHEINE ADENYLYLTRANSFERASE"/>
    <property type="match status" value="1"/>
</dbReference>
<dbReference type="Pfam" id="PF01467">
    <property type="entry name" value="CTP_transf_like"/>
    <property type="match status" value="1"/>
</dbReference>
<dbReference type="SUPFAM" id="SSF52374">
    <property type="entry name" value="Nucleotidylyl transferase"/>
    <property type="match status" value="1"/>
</dbReference>
<proteinExistence type="inferred from homology"/>
<gene>
    <name evidence="1" type="primary">nadD</name>
    <name type="ordered locus">LMOf2365_1507</name>
</gene>
<accession>Q71ZI2</accession>
<protein>
    <recommendedName>
        <fullName evidence="1">Probable nicotinate-nucleotide adenylyltransferase</fullName>
        <ecNumber evidence="1">2.7.7.18</ecNumber>
    </recommendedName>
    <alternativeName>
        <fullName evidence="1">Deamido-NAD(+) diphosphorylase</fullName>
    </alternativeName>
    <alternativeName>
        <fullName evidence="1">Deamido-NAD(+) pyrophosphorylase</fullName>
    </alternativeName>
    <alternativeName>
        <fullName evidence="1">Nicotinate mononucleotide adenylyltransferase</fullName>
        <shortName evidence="1">NaMN adenylyltransferase</shortName>
    </alternativeName>
</protein>